<accession>Q9H158</accession>
<accession>Q9Y5F5</accession>
<accession>Q9Y5I5</accession>
<dbReference type="EMBL" id="AF152303">
    <property type="protein sequence ID" value="AAD43697.1"/>
    <property type="molecule type" value="mRNA"/>
</dbReference>
<dbReference type="EMBL" id="AF152473">
    <property type="protein sequence ID" value="AAD43734.1"/>
    <property type="molecule type" value="mRNA"/>
</dbReference>
<dbReference type="EMBL" id="AJ007608">
    <property type="protein sequence ID" value="CAC22255.1"/>
    <property type="molecule type" value="mRNA"/>
</dbReference>
<dbReference type="CCDS" id="CCDS4241.1">
    <molecule id="Q9H158-1"/>
</dbReference>
<dbReference type="RefSeq" id="NP_061721.2">
    <molecule id="Q9H158-1"/>
    <property type="nucleotide sequence ID" value="NM_018898.3"/>
</dbReference>
<dbReference type="SMR" id="Q9H158"/>
<dbReference type="BioGRID" id="121075">
    <property type="interactions" value="22"/>
</dbReference>
<dbReference type="FunCoup" id="Q9H158">
    <property type="interactions" value="32"/>
</dbReference>
<dbReference type="IntAct" id="Q9H158">
    <property type="interactions" value="17"/>
</dbReference>
<dbReference type="STRING" id="9606.ENSP00000253807"/>
<dbReference type="GlyCosmos" id="Q9H158">
    <property type="glycosylation" value="4 sites, No reported glycans"/>
</dbReference>
<dbReference type="GlyGen" id="Q9H158">
    <property type="glycosylation" value="4 sites"/>
</dbReference>
<dbReference type="iPTMnet" id="Q9H158"/>
<dbReference type="PhosphoSitePlus" id="Q9H158"/>
<dbReference type="BioMuta" id="PCDHAC1"/>
<dbReference type="DMDM" id="143811434"/>
<dbReference type="jPOST" id="Q9H158"/>
<dbReference type="MassIVE" id="Q9H158"/>
<dbReference type="PaxDb" id="9606-ENSP00000253807"/>
<dbReference type="PeptideAtlas" id="Q9H158"/>
<dbReference type="ProteomicsDB" id="80357">
    <molecule id="Q9H158-1"/>
</dbReference>
<dbReference type="Antibodypedia" id="45516">
    <property type="antibodies" value="51 antibodies from 13 providers"/>
</dbReference>
<dbReference type="DNASU" id="56135"/>
<dbReference type="Ensembl" id="ENST00000253807.3">
    <molecule id="Q9H158-1"/>
    <property type="protein sequence ID" value="ENSP00000253807.2"/>
    <property type="gene ID" value="ENSG00000248383.5"/>
</dbReference>
<dbReference type="Ensembl" id="ENST00000409700.4">
    <molecule id="Q9H158-2"/>
    <property type="protein sequence ID" value="ENSP00000386356.3"/>
    <property type="gene ID" value="ENSG00000248383.5"/>
</dbReference>
<dbReference type="Ensembl" id="ENST00000708335.1">
    <molecule id="Q9H158-2"/>
    <property type="protein sequence ID" value="ENSP00000517177.1"/>
    <property type="gene ID" value="ENSG00000291670.1"/>
</dbReference>
<dbReference type="Ensembl" id="ENST00000708336.1">
    <molecule id="Q9H158-1"/>
    <property type="protein sequence ID" value="ENSP00000517178.1"/>
    <property type="gene ID" value="ENSG00000291670.1"/>
</dbReference>
<dbReference type="GeneID" id="56135"/>
<dbReference type="KEGG" id="hsa:56135"/>
<dbReference type="MANE-Select" id="ENST00000253807.3">
    <property type="protein sequence ID" value="ENSP00000253807.2"/>
    <property type="RefSeq nucleotide sequence ID" value="NM_018898.5"/>
    <property type="RefSeq protein sequence ID" value="NP_061721.2"/>
</dbReference>
<dbReference type="UCSC" id="uc003lig.3">
    <molecule id="Q9H158-1"/>
    <property type="organism name" value="human"/>
</dbReference>
<dbReference type="AGR" id="HGNC:8676"/>
<dbReference type="CTD" id="56135"/>
<dbReference type="DisGeNET" id="56135"/>
<dbReference type="GeneCards" id="PCDHAC1"/>
<dbReference type="HGNC" id="HGNC:8676">
    <property type="gene designation" value="PCDHAC1"/>
</dbReference>
<dbReference type="HPA" id="ENSG00000248383">
    <property type="expression patterns" value="Tissue enriched (parathyroid)"/>
</dbReference>
<dbReference type="MIM" id="604966">
    <property type="type" value="gene"/>
</dbReference>
<dbReference type="MIM" id="606320">
    <property type="type" value="gene"/>
</dbReference>
<dbReference type="neXtProt" id="NX_Q9H158"/>
<dbReference type="OpenTargets" id="ENSG00000248383"/>
<dbReference type="PharmGKB" id="PA33022"/>
<dbReference type="VEuPathDB" id="HostDB:ENSG00000248383"/>
<dbReference type="eggNOG" id="KOG3594">
    <property type="taxonomic scope" value="Eukaryota"/>
</dbReference>
<dbReference type="GeneTree" id="ENSGT00940000165142"/>
<dbReference type="HOGENOM" id="CLU_006480_3_0_1"/>
<dbReference type="InParanoid" id="Q9H158"/>
<dbReference type="OMA" id="NDHAPQM"/>
<dbReference type="OrthoDB" id="6252479at2759"/>
<dbReference type="PAN-GO" id="Q9H158">
    <property type="GO annotations" value="2 GO annotations based on evolutionary models"/>
</dbReference>
<dbReference type="PhylomeDB" id="Q9H158"/>
<dbReference type="TreeFam" id="TF332299"/>
<dbReference type="PathwayCommons" id="Q9H158"/>
<dbReference type="SignaLink" id="Q9H158"/>
<dbReference type="SIGNOR" id="Q9H158"/>
<dbReference type="BioGRID-ORCS" id="56135">
    <property type="hits" value="12 hits in 1094 CRISPR screens"/>
</dbReference>
<dbReference type="GenomeRNAi" id="56135"/>
<dbReference type="Pharos" id="Q9H158">
    <property type="development level" value="Tdark"/>
</dbReference>
<dbReference type="PRO" id="PR:Q9H158"/>
<dbReference type="Proteomes" id="UP000005640">
    <property type="component" value="Chromosome 5"/>
</dbReference>
<dbReference type="RNAct" id="Q9H158">
    <property type="molecule type" value="protein"/>
</dbReference>
<dbReference type="Bgee" id="ENSG00000248383">
    <property type="expression patterns" value="Expressed in male germ line stem cell (sensu Vertebrata) in testis and 69 other cell types or tissues"/>
</dbReference>
<dbReference type="GO" id="GO:0005886">
    <property type="term" value="C:plasma membrane"/>
    <property type="evidence" value="ECO:0000318"/>
    <property type="project" value="GO_Central"/>
</dbReference>
<dbReference type="GO" id="GO:0005509">
    <property type="term" value="F:calcium ion binding"/>
    <property type="evidence" value="ECO:0007669"/>
    <property type="project" value="InterPro"/>
</dbReference>
<dbReference type="GO" id="GO:0007155">
    <property type="term" value="P:cell adhesion"/>
    <property type="evidence" value="ECO:0000318"/>
    <property type="project" value="GO_Central"/>
</dbReference>
<dbReference type="GO" id="GO:0007156">
    <property type="term" value="P:homophilic cell adhesion via plasma membrane adhesion molecules"/>
    <property type="evidence" value="ECO:0007669"/>
    <property type="project" value="InterPro"/>
</dbReference>
<dbReference type="GO" id="GO:0007399">
    <property type="term" value="P:nervous system development"/>
    <property type="evidence" value="ECO:0000304"/>
    <property type="project" value="ProtInc"/>
</dbReference>
<dbReference type="CDD" id="cd11304">
    <property type="entry name" value="Cadherin_repeat"/>
    <property type="match status" value="6"/>
</dbReference>
<dbReference type="FunFam" id="2.60.40.60:FF:000004">
    <property type="entry name" value="Protocadherin 1 gamma 2"/>
    <property type="match status" value="1"/>
</dbReference>
<dbReference type="FunFam" id="2.60.40.60:FF:000002">
    <property type="entry name" value="Protocadherin alpha 2"/>
    <property type="match status" value="1"/>
</dbReference>
<dbReference type="FunFam" id="2.60.40.60:FF:000006">
    <property type="entry name" value="Protocadherin alpha 2"/>
    <property type="match status" value="1"/>
</dbReference>
<dbReference type="FunFam" id="2.60.40.60:FF:000007">
    <property type="entry name" value="Protocadherin alpha 2"/>
    <property type="match status" value="1"/>
</dbReference>
<dbReference type="FunFam" id="2.60.40.60:FF:000294">
    <property type="entry name" value="Protocadherin alpha subfamily C, 2"/>
    <property type="match status" value="1"/>
</dbReference>
<dbReference type="FunFam" id="2.60.40.60:FF:000129">
    <property type="entry name" value="protocadherin alpha-C2 isoform X1"/>
    <property type="match status" value="1"/>
</dbReference>
<dbReference type="Gene3D" id="2.60.40.60">
    <property type="entry name" value="Cadherins"/>
    <property type="match status" value="6"/>
</dbReference>
<dbReference type="InterPro" id="IPR002126">
    <property type="entry name" value="Cadherin-like_dom"/>
</dbReference>
<dbReference type="InterPro" id="IPR015919">
    <property type="entry name" value="Cadherin-like_sf"/>
</dbReference>
<dbReference type="InterPro" id="IPR032455">
    <property type="entry name" value="Cadherin_C"/>
</dbReference>
<dbReference type="InterPro" id="IPR031904">
    <property type="entry name" value="Cadherin_CBD"/>
</dbReference>
<dbReference type="InterPro" id="IPR020894">
    <property type="entry name" value="Cadherin_CS"/>
</dbReference>
<dbReference type="InterPro" id="IPR013164">
    <property type="entry name" value="Cadherin_N"/>
</dbReference>
<dbReference type="InterPro" id="IPR050174">
    <property type="entry name" value="Protocadherin/Cadherin-CA"/>
</dbReference>
<dbReference type="PANTHER" id="PTHR24028">
    <property type="entry name" value="CADHERIN-87A"/>
    <property type="match status" value="1"/>
</dbReference>
<dbReference type="PANTHER" id="PTHR24028:SF153">
    <property type="entry name" value="PROTOCADHERIN ALPHA-C1"/>
    <property type="match status" value="1"/>
</dbReference>
<dbReference type="Pfam" id="PF00028">
    <property type="entry name" value="Cadherin"/>
    <property type="match status" value="5"/>
</dbReference>
<dbReference type="Pfam" id="PF08266">
    <property type="entry name" value="Cadherin_2"/>
    <property type="match status" value="1"/>
</dbReference>
<dbReference type="Pfam" id="PF16492">
    <property type="entry name" value="Cadherin_C_2"/>
    <property type="match status" value="1"/>
</dbReference>
<dbReference type="Pfam" id="PF15974">
    <property type="entry name" value="Cadherin_tail"/>
    <property type="match status" value="1"/>
</dbReference>
<dbReference type="PRINTS" id="PR00205">
    <property type="entry name" value="CADHERIN"/>
</dbReference>
<dbReference type="SMART" id="SM00112">
    <property type="entry name" value="CA"/>
    <property type="match status" value="6"/>
</dbReference>
<dbReference type="SUPFAM" id="SSF49313">
    <property type="entry name" value="Cadherin-like"/>
    <property type="match status" value="5"/>
</dbReference>
<dbReference type="PROSITE" id="PS00232">
    <property type="entry name" value="CADHERIN_1"/>
    <property type="match status" value="5"/>
</dbReference>
<dbReference type="PROSITE" id="PS50268">
    <property type="entry name" value="CADHERIN_2"/>
    <property type="match status" value="6"/>
</dbReference>
<keyword id="KW-0025">Alternative splicing</keyword>
<keyword id="KW-0106">Calcium</keyword>
<keyword id="KW-0130">Cell adhesion</keyword>
<keyword id="KW-1003">Cell membrane</keyword>
<keyword id="KW-0325">Glycoprotein</keyword>
<keyword id="KW-0472">Membrane</keyword>
<keyword id="KW-1185">Reference proteome</keyword>
<keyword id="KW-0677">Repeat</keyword>
<keyword id="KW-0732">Signal</keyword>
<keyword id="KW-0812">Transmembrane</keyword>
<keyword id="KW-1133">Transmembrane helix</keyword>
<sequence>MVGCGVAVLCLWVSCGAAAGQLEYSVPEETERGVAVGNLSADLRLPAAAMSSRNFRFLSSHRELYFGVDLPSGNLVVREPADREQLCRAKAACVLTYDLVLEDPLELHKIRIHVLDTNDNSPLFPAGDVQLHIPEFLTPGARFTLPNAQDDDEGSNGILSYSLSPSQHFRLDMGSRVDGSEYPELVLEKALDREQRATHLLVLTARDGGLPARSGDAQVTIIVVDTNDNAPVFERSVYRTKVPETAPNGTVLFRVQALDPDEGSNGEVQYSLSNSTQAELRHRFHVHPKSGEVQVAASLGPPETLLEAYIEARDEGVFGLASTAKLLVEVTDVNDHAPELDFLTLSNPVPEDAAPGTVIALFSVKDEDLDSNGRVICGMSSAGPFQLTASFDNYYSLLIDGPLDREQISEYQVLITASDSGSPPLSTRRTITVSVADVNDNTPNFPQPQQELFVAENNGPGASLGRVFAQDPDLGKNGLVSYELLDVISEGPSASSLLAVESSSGAITAKTSFDFEQLRGFHFQVEGRDGGIPPRSATVTINLFVVDRNDNYPVILFPLPRNGSVPVEIVPRSARTGHLVTKVVAEDADSGSNAWLSYHISRASDSSLFRISANIGELRTARLVLPTDAVKQRVVVVVRDHGDPPLSSSVTLGVLLSNSVPQLLPDFEDVWEPGGQLSAQNLYLVIALACISFLFLGCLLFFVCTKLHQSPGCCAQSCCRSTEDLRYGSKMVSNPCMTSATIDVTTVERLSQTYLYRASLGLGSDNNSLLLRGEYNAADLRNLATGVGLNLPISCIQIRNRKGDHANVNAMPRQPNPDWRYSASLRAGMHSSVHLEEAGILRAGPGGPDQQWPTVSSATPEPEAGEVSPPVGAGVNSNSWTFKYGPGNPKQSGPGELPDKFIIPGSPAIISIRQEPTNSQIDKSDFITFGKKEETKKKKKKKKGNKTQEKKEKGNSTTDNSDQ</sequence>
<feature type="signal peptide" evidence="2">
    <location>
        <begin position="1"/>
        <end position="18"/>
    </location>
</feature>
<feature type="chain" id="PRO_0000003910" description="Protocadherin alpha-C1">
    <location>
        <begin position="19"/>
        <end position="963"/>
    </location>
</feature>
<feature type="topological domain" description="Extracellular" evidence="2">
    <location>
        <begin position="19"/>
        <end position="683"/>
    </location>
</feature>
<feature type="transmembrane region" description="Helical" evidence="2">
    <location>
        <begin position="684"/>
        <end position="704"/>
    </location>
</feature>
<feature type="topological domain" description="Cytoplasmic" evidence="2">
    <location>
        <begin position="705"/>
        <end position="963"/>
    </location>
</feature>
<feature type="domain" description="Cadherin 1" evidence="3">
    <location>
        <begin position="19"/>
        <end position="124"/>
    </location>
</feature>
<feature type="domain" description="Cadherin 2" evidence="3">
    <location>
        <begin position="125"/>
        <end position="233"/>
    </location>
</feature>
<feature type="domain" description="Cadherin 3" evidence="3">
    <location>
        <begin position="234"/>
        <end position="340"/>
    </location>
</feature>
<feature type="domain" description="Cadherin 4" evidence="3">
    <location>
        <begin position="349"/>
        <end position="445"/>
    </location>
</feature>
<feature type="domain" description="Cadherin 5" evidence="3">
    <location>
        <begin position="446"/>
        <end position="555"/>
    </location>
</feature>
<feature type="domain" description="Cadherin 6" evidence="3">
    <location>
        <begin position="570"/>
        <end position="667"/>
    </location>
</feature>
<feature type="repeat" description="PXXP 1">
    <location>
        <begin position="812"/>
        <end position="815"/>
    </location>
</feature>
<feature type="repeat" description="PXXP 2">
    <location>
        <begin position="845"/>
        <end position="848"/>
    </location>
</feature>
<feature type="repeat" description="PXXP 3">
    <location>
        <begin position="886"/>
        <end position="889"/>
    </location>
</feature>
<feature type="repeat" description="PXXP 4">
    <location>
        <begin position="904"/>
        <end position="907"/>
    </location>
</feature>
<feature type="region of interest" description="4 X 4 AA repeats of P-X-X-P">
    <location>
        <begin position="812"/>
        <end position="907"/>
    </location>
</feature>
<feature type="region of interest" description="Disordered" evidence="4">
    <location>
        <begin position="844"/>
        <end position="963"/>
    </location>
</feature>
<feature type="compositionally biased region" description="Basic and acidic residues" evidence="4">
    <location>
        <begin position="922"/>
        <end position="936"/>
    </location>
</feature>
<feature type="glycosylation site" description="N-linked (GlcNAc...) asparagine" evidence="2">
    <location>
        <position position="38"/>
    </location>
</feature>
<feature type="glycosylation site" description="N-linked (GlcNAc...) asparagine" evidence="2">
    <location>
        <position position="248"/>
    </location>
</feature>
<feature type="glycosylation site" description="N-linked (GlcNAc...) asparagine" evidence="2">
    <location>
        <position position="274"/>
    </location>
</feature>
<feature type="glycosylation site" description="N-linked (GlcNAc...) asparagine" evidence="2">
    <location>
        <position position="562"/>
    </location>
</feature>
<feature type="splice variant" id="VSP_000699" description="In isoform Short." evidence="6">
    <original>PRQPNPD</original>
    <variation>VSKFYGI</variation>
    <location>
        <begin position="812"/>
        <end position="818"/>
    </location>
</feature>
<feature type="splice variant" id="VSP_000700" description="In isoform Short." evidence="6">
    <location>
        <begin position="819"/>
        <end position="963"/>
    </location>
</feature>
<feature type="sequence variant" id="VAR_048540" description="In dbSNP:rs246074." evidence="5">
    <original>L</original>
    <variation>V</variation>
    <location>
        <position position="498"/>
    </location>
</feature>
<feature type="sequence conflict" description="In Ref. 2; CAC22255." evidence="7" ref="2">
    <original>AS</original>
    <variation>PP</variation>
    <location>
        <begin position="462"/>
        <end position="463"/>
    </location>
</feature>
<feature type="sequence conflict" description="In Ref. 2; CAC22255." evidence="7" ref="2">
    <original>D</original>
    <variation>E</variation>
    <location>
        <position position="818"/>
    </location>
</feature>
<organism>
    <name type="scientific">Homo sapiens</name>
    <name type="common">Human</name>
    <dbReference type="NCBI Taxonomy" id="9606"/>
    <lineage>
        <taxon>Eukaryota</taxon>
        <taxon>Metazoa</taxon>
        <taxon>Chordata</taxon>
        <taxon>Craniata</taxon>
        <taxon>Vertebrata</taxon>
        <taxon>Euteleostomi</taxon>
        <taxon>Mammalia</taxon>
        <taxon>Eutheria</taxon>
        <taxon>Euarchontoglires</taxon>
        <taxon>Primates</taxon>
        <taxon>Haplorrhini</taxon>
        <taxon>Catarrhini</taxon>
        <taxon>Hominidae</taxon>
        <taxon>Homo</taxon>
    </lineage>
</organism>
<protein>
    <recommendedName>
        <fullName>Protocadherin alpha-C1</fullName>
        <shortName>PCDH-alpha-C1</shortName>
    </recommendedName>
</protein>
<comment type="function">
    <text>Potential calcium-dependent cell-adhesion protein. May be involved in the establishment and maintenance of specific neuronal connections in the brain.</text>
</comment>
<comment type="subcellular location">
    <subcellularLocation>
        <location evidence="1">Cell membrane</location>
        <topology evidence="1">Single-pass type I membrane protein</topology>
    </subcellularLocation>
</comment>
<comment type="alternative products">
    <event type="alternative splicing"/>
    <isoform>
        <id>Q9H158-1</id>
        <name>Long</name>
        <sequence type="displayed"/>
    </isoform>
    <isoform>
        <id>Q9H158-2</id>
        <name>Short</name>
        <sequence type="described" ref="VSP_000699 VSP_000700"/>
    </isoform>
</comment>
<proteinExistence type="evidence at transcript level"/>
<evidence type="ECO:0000250" key="1"/>
<evidence type="ECO:0000255" key="2"/>
<evidence type="ECO:0000255" key="3">
    <source>
        <dbReference type="PROSITE-ProRule" id="PRU00043"/>
    </source>
</evidence>
<evidence type="ECO:0000256" key="4">
    <source>
        <dbReference type="SAM" id="MobiDB-lite"/>
    </source>
</evidence>
<evidence type="ECO:0000269" key="5">
    <source>
    </source>
</evidence>
<evidence type="ECO:0000303" key="6">
    <source>
    </source>
</evidence>
<evidence type="ECO:0000305" key="7"/>
<gene>
    <name type="primary">PCDHAC1</name>
</gene>
<name>PCDC1_HUMAN</name>
<reference key="1">
    <citation type="journal article" date="1999" name="Cell">
        <title>A striking organization of a large family of human neural cadherin-like cell adhesion genes.</title>
        <authorList>
            <person name="Wu Q."/>
            <person name="Maniatis T."/>
        </authorList>
    </citation>
    <scope>NUCLEOTIDE SEQUENCE [MRNA] (ISOFORMS LONG AND SHORT)</scope>
    <scope>VARIANT VAL-498</scope>
    <source>
        <tissue>Brain</tissue>
    </source>
</reference>
<reference key="2">
    <citation type="submission" date="1998-07" db="EMBL/GenBank/DDBJ databases">
        <title>In silico identification and molecular cloning of novel human protocadherin genes having identical 3' exons.</title>
        <authorList>
            <person name="Kools P.F.J."/>
            <person name="van Roy F."/>
        </authorList>
    </citation>
    <scope>NUCLEOTIDE SEQUENCE [MRNA] (ISOFORM LONG)</scope>
</reference>